<reference key="1">
    <citation type="journal article" date="1983" name="Gene">
        <title>Evolution of the nucleotide sequence of influenza virus RNA segment 7 during drift of the H3N2 subtype.</title>
        <authorList>
            <person name="Ortin J."/>
            <person name="Martinez C."/>
            <person name="del Rio L."/>
            <person name="Davila M."/>
            <person name="Lopez-Galindez C."/>
            <person name="Villanueva N."/>
            <person name="Domingo E."/>
        </authorList>
    </citation>
    <scope>NUCLEOTIDE SEQUENCE [GENOMIC RNA]</scope>
</reference>
<reference key="2">
    <citation type="journal article" date="2004" name="Virus Res.">
        <title>Assembly and budding of influenza virus.</title>
        <authorList>
            <person name="Nayak D.P."/>
            <person name="Hui E.K."/>
            <person name="Barman S."/>
        </authorList>
    </citation>
    <scope>REVIEW</scope>
</reference>
<reference key="3">
    <citation type="journal article" date="2003" name="FEBS Lett.">
        <title>Proton conduction through the M2 protein of the influenza A virus; a quantitative, mechanistic analysis of experimental data.</title>
        <authorList>
            <person name="Lear J.D."/>
        </authorList>
    </citation>
    <scope>REVIEW</scope>
</reference>
<reference key="4">
    <citation type="journal article" date="2003" name="FEBS Lett.">
        <title>Computational studies of proton transport through the M2 channel.</title>
        <authorList>
            <person name="Wu Y."/>
            <person name="Voth G.A."/>
        </authorList>
    </citation>
    <scope>REVIEW</scope>
</reference>
<evidence type="ECO:0000255" key="1">
    <source>
        <dbReference type="HAMAP-Rule" id="MF_04069"/>
    </source>
</evidence>
<evidence type="ECO:0000256" key="2">
    <source>
        <dbReference type="SAM" id="MobiDB-lite"/>
    </source>
</evidence>
<gene>
    <name evidence="1" type="primary">M</name>
</gene>
<protein>
    <recommendedName>
        <fullName evidence="1">Matrix protein 2</fullName>
    </recommendedName>
    <alternativeName>
        <fullName evidence="1">Proton channel protein M2</fullName>
    </alternativeName>
</protein>
<dbReference type="EMBL" id="K01140">
    <property type="protein sequence ID" value="AAA43091.1"/>
    <property type="molecule type" value="Genomic_RNA"/>
</dbReference>
<dbReference type="PIR" id="A04084">
    <property type="entry name" value="MFIV2K"/>
</dbReference>
<dbReference type="SMR" id="P03491"/>
<dbReference type="GlyCosmos" id="P03491">
    <property type="glycosylation" value="1 site, No reported glycans"/>
</dbReference>
<dbReference type="GO" id="GO:0020002">
    <property type="term" value="C:host cell plasma membrane"/>
    <property type="evidence" value="ECO:0007669"/>
    <property type="project" value="UniProtKB-SubCell"/>
</dbReference>
<dbReference type="GO" id="GO:0016020">
    <property type="term" value="C:membrane"/>
    <property type="evidence" value="ECO:0007669"/>
    <property type="project" value="UniProtKB-UniRule"/>
</dbReference>
<dbReference type="GO" id="GO:0055036">
    <property type="term" value="C:virion membrane"/>
    <property type="evidence" value="ECO:0007669"/>
    <property type="project" value="UniProtKB-SubCell"/>
</dbReference>
<dbReference type="GO" id="GO:0005216">
    <property type="term" value="F:monoatomic ion channel activity"/>
    <property type="evidence" value="ECO:0007669"/>
    <property type="project" value="UniProtKB-UniRule"/>
</dbReference>
<dbReference type="GO" id="GO:0015078">
    <property type="term" value="F:proton transmembrane transporter activity"/>
    <property type="evidence" value="ECO:0007669"/>
    <property type="project" value="UniProtKB-UniRule"/>
</dbReference>
<dbReference type="GO" id="GO:0051259">
    <property type="term" value="P:protein complex oligomerization"/>
    <property type="evidence" value="ECO:0007669"/>
    <property type="project" value="UniProtKB-UniRule"/>
</dbReference>
<dbReference type="GO" id="GO:0044694">
    <property type="term" value="P:symbiont genome entry into host cell via pore formation in plasma membrane"/>
    <property type="evidence" value="ECO:0007669"/>
    <property type="project" value="UniProtKB-UniRule"/>
</dbReference>
<dbReference type="GO" id="GO:0140321">
    <property type="term" value="P:symbiont-mediated suppression of host autophagy"/>
    <property type="evidence" value="ECO:0007669"/>
    <property type="project" value="UniProtKB-KW"/>
</dbReference>
<dbReference type="Gene3D" id="6.10.250.1640">
    <property type="match status" value="1"/>
</dbReference>
<dbReference type="HAMAP" id="MF_04069">
    <property type="entry name" value="INFV_M2"/>
    <property type="match status" value="1"/>
</dbReference>
<dbReference type="InterPro" id="IPR002089">
    <property type="entry name" value="Flu_M2"/>
</dbReference>
<dbReference type="Pfam" id="PF00599">
    <property type="entry name" value="Flu_M2"/>
    <property type="match status" value="1"/>
</dbReference>
<name>M2_I79A0</name>
<feature type="chain" id="PRO_0000078878" description="Matrix protein 2">
    <location>
        <begin position="1"/>
        <end position="97"/>
    </location>
</feature>
<feature type="topological domain" description="Virion surface" evidence="1">
    <location>
        <begin position="1"/>
        <end position="22"/>
    </location>
</feature>
<feature type="transmembrane region" description="Helical; Signal-anchor for type III membrane protein" evidence="1">
    <location>
        <begin position="23"/>
        <end position="43"/>
    </location>
</feature>
<feature type="topological domain" description="Intravirion" evidence="1">
    <location>
        <begin position="44"/>
        <end position="97"/>
    </location>
</feature>
<feature type="region of interest" description="Disordered" evidence="2">
    <location>
        <begin position="60"/>
        <end position="88"/>
    </location>
</feature>
<feature type="compositionally biased region" description="Basic and acidic residues" evidence="2">
    <location>
        <begin position="71"/>
        <end position="80"/>
    </location>
</feature>
<feature type="site" description="Essential for channel activity, possibly by being protonated during channel activation, and by forming the channel gate and the selective filter" evidence="1">
    <location>
        <position position="37"/>
    </location>
</feature>
<feature type="site" description="Seems to be involved in pH gating" evidence="1">
    <location>
        <position position="41"/>
    </location>
</feature>
<feature type="modified residue" description="Phosphoserine; by host" evidence="1">
    <location>
        <position position="64"/>
    </location>
</feature>
<feature type="modified residue" description="Phosphoserine; by host" evidence="1">
    <location>
        <position position="93"/>
    </location>
</feature>
<feature type="lipid moiety-binding region" description="S-palmitoyl cysteine; by host" evidence="1">
    <location>
        <position position="50"/>
    </location>
</feature>
<feature type="glycosylation site" description="N-linked (GlcNAc...) asparagine; by host" evidence="1">
    <location>
        <position position="20"/>
    </location>
</feature>
<feature type="disulfide bond" description="Interchain (with C-17)" evidence="1">
    <location>
        <position position="17"/>
    </location>
</feature>
<feature type="disulfide bond" description="Interchain (with C-19)" evidence="1">
    <location>
        <position position="19"/>
    </location>
</feature>
<organismHost>
    <name type="scientific">Aves</name>
    <dbReference type="NCBI Taxonomy" id="8782"/>
</organismHost>
<organismHost>
    <name type="scientific">Cetacea</name>
    <name type="common">whales</name>
    <dbReference type="NCBI Taxonomy" id="9721"/>
</organismHost>
<organismHost>
    <name type="scientific">Homo sapiens</name>
    <name type="common">Human</name>
    <dbReference type="NCBI Taxonomy" id="9606"/>
</organismHost>
<organismHost>
    <name type="scientific">Phocidae</name>
    <name type="common">true seals</name>
    <dbReference type="NCBI Taxonomy" id="9709"/>
</organismHost>
<organismHost>
    <name type="scientific">Sus scrofa</name>
    <name type="common">Pig</name>
    <dbReference type="NCBI Taxonomy" id="9823"/>
</organismHost>
<proteinExistence type="inferred from homology"/>
<organism>
    <name type="scientific">Influenza A virus (strain A/Bangkok/1/1979 H3N2)</name>
    <dbReference type="NCBI Taxonomy" id="385630"/>
    <lineage>
        <taxon>Viruses</taxon>
        <taxon>Riboviria</taxon>
        <taxon>Orthornavirae</taxon>
        <taxon>Negarnaviricota</taxon>
        <taxon>Polyploviricotina</taxon>
        <taxon>Insthoviricetes</taxon>
        <taxon>Articulavirales</taxon>
        <taxon>Orthomyxoviridae</taxon>
        <taxon>Alphainfluenzavirus</taxon>
        <taxon>Alphainfluenzavirus influenzae</taxon>
        <taxon>Influenza A virus</taxon>
    </lineage>
</organism>
<accession>P03491</accession>
<keyword id="KW-0025">Alternative splicing</keyword>
<keyword id="KW-1015">Disulfide bond</keyword>
<keyword id="KW-0325">Glycoprotein</keyword>
<keyword id="KW-1032">Host cell membrane</keyword>
<keyword id="KW-1043">Host membrane</keyword>
<keyword id="KW-0945">Host-virus interaction</keyword>
<keyword id="KW-0375">Hydrogen ion transport</keyword>
<keyword id="KW-1083">Inhibition of host autophagy by virus</keyword>
<keyword id="KW-0407">Ion channel</keyword>
<keyword id="KW-0406">Ion transport</keyword>
<keyword id="KW-0449">Lipoprotein</keyword>
<keyword id="KW-0472">Membrane</keyword>
<keyword id="KW-0564">Palmitate</keyword>
<keyword id="KW-0597">Phosphoprotein</keyword>
<keyword id="KW-0735">Signal-anchor</keyword>
<keyword id="KW-0812">Transmembrane</keyword>
<keyword id="KW-1133">Transmembrane helix</keyword>
<keyword id="KW-0813">Transport</keyword>
<keyword id="KW-1182">Viral ion channel</keyword>
<keyword id="KW-0946">Virion</keyword>
<sequence>MSLLTEVETPIRNEWGCRCNDSSDPLVVAASIIGILHLILWILDRLFFKCIYRFFKHGLKRGPSTEGVPESMREEYRKEQQNAVDADDSHFVSIELE</sequence>
<comment type="function">
    <text evidence="1">Forms a proton-selective ion channel that is necessary for the efficient release of the viral genome during virus entry. After attaching to the cell surface, the virion enters the cell by endocytosis. Acidification of the endosome triggers M2 ion channel activity. The influx of protons into virion interior is believed to disrupt interactions between the viral ribonucleoprotein (RNP), matrix protein 1 (M1), and lipid bilayers, thereby freeing the viral genome from interaction with viral proteins and enabling RNA segments to migrate to the host cell nucleus, where influenza virus RNA transcription and replication occur. Also plays a role in viral proteins secretory pathway. Elevates the intravesicular pH of normally acidic compartments, such as trans-Golgi network, preventing newly formed hemagglutinin from premature switching to the fusion-active conformation.</text>
</comment>
<comment type="activity regulation">
    <text>The M2 protein from most influenza A strains is inhibited by amantadine and rimantadine, resulting in viral uncoating incapacity. Emergence of amantadine-resistant variants is usually rapid.</text>
</comment>
<comment type="subunit">
    <text evidence="1">Homotetramer; composed of two disulfide-linked dimers held together by non-covalent interactions. May interact with matrix protein 1.</text>
</comment>
<comment type="subcellular location">
    <subcellularLocation>
        <location evidence="1">Virion membrane</location>
    </subcellularLocation>
    <subcellularLocation>
        <location evidence="1">Host apical cell membrane</location>
        <topology evidence="1">Single-pass type III membrane protein</topology>
    </subcellularLocation>
    <text evidence="1">Abundantly expressed at the apical plasma membrane in infected polarized epithelial cells, in close proximity to budding and assembled virions. Minor component of virions (only 16-20 molecules/virion).</text>
</comment>
<comment type="alternative products">
    <event type="alternative splicing"/>
    <isoform>
        <id>P03491-1</id>
        <name>M2</name>
        <sequence type="displayed"/>
    </isoform>
    <isoform>
        <id>P03487-1</id>
        <name>M1</name>
        <sequence type="external"/>
    </isoform>
    <text>Only the first 9 residues are shared by the 2 isoforms.</text>
</comment>
<comment type="domain">
    <text evidence="1">Cytoplasmic tail plays an important role in virion assembly and morphogenesis.</text>
</comment>
<comment type="miscellaneous">
    <text evidence="1">When the channel is activated, one or more imidazole moieties of His-37 probably become bi-protonated.</text>
</comment>
<comment type="similarity">
    <text evidence="1">Belongs to the influenza viruses matrix protein M2 family.</text>
</comment>